<name>ADFB_TENMO</name>
<keyword id="KW-0903">Direct protein sequencing</keyword>
<keyword id="KW-0372">Hormone</keyword>
<keyword id="KW-0527">Neuropeptide</keyword>
<keyword id="KW-0964">Secreted</keyword>
<protein>
    <recommendedName>
        <fullName>Antidiuretic factor B</fullName>
        <shortName>ADFb</shortName>
    </recommendedName>
</protein>
<sequence>YDDGSYKPHIYGF</sequence>
<proteinExistence type="evidence at protein level"/>
<dbReference type="GO" id="GO:0005576">
    <property type="term" value="C:extracellular region"/>
    <property type="evidence" value="ECO:0007669"/>
    <property type="project" value="UniProtKB-SubCell"/>
</dbReference>
<dbReference type="GO" id="GO:0005179">
    <property type="term" value="F:hormone activity"/>
    <property type="evidence" value="ECO:0007669"/>
    <property type="project" value="UniProtKB-KW"/>
</dbReference>
<dbReference type="GO" id="GO:0007218">
    <property type="term" value="P:neuropeptide signaling pathway"/>
    <property type="evidence" value="ECO:0007669"/>
    <property type="project" value="UniProtKB-KW"/>
</dbReference>
<reference evidence="2" key="1">
    <citation type="journal article" date="2003" name="Peptides">
        <title>Isolation, identification and localization of a second beetle antidiuretic peptide.</title>
        <authorList>
            <person name="Eigenheer R.A."/>
            <person name="Wiehart U.M."/>
            <person name="Nicolson S.W."/>
            <person name="Schoofs L."/>
            <person name="Schegg K.M."/>
            <person name="Hull J.J."/>
            <person name="Schooley D.A."/>
        </authorList>
    </citation>
    <scope>PROTEIN SEQUENCE</scope>
    <scope>FUNCTION</scope>
    <scope>TISSUE SPECIFICITY</scope>
    <scope>MASS SPECTROMETRY</scope>
    <scope>SYNTHESIS</scope>
    <source>
        <tissue>Head</tissue>
    </source>
</reference>
<evidence type="ECO:0000269" key="1">
    <source>
    </source>
</evidence>
<evidence type="ECO:0000305" key="2"/>
<accession>P83109</accession>
<comment type="function">
    <text evidence="1">Inhibitor of fluid secretion by Malpighian tubules. Uses cGMP as second messenger. May function as an antidiuretic hormone.</text>
</comment>
<comment type="subcellular location">
    <subcellularLocation>
        <location>Secreted</location>
    </subcellularLocation>
</comment>
<comment type="tissue specificity">
    <text evidence="1">Brain. Appears to be mainly expressed in two pairs of bilaterally symmetrical cells in the protocerebrum.</text>
</comment>
<comment type="mass spectrometry"/>
<organism evidence="2">
    <name type="scientific">Tenebrio molitor</name>
    <name type="common">Yellow mealworm beetle</name>
    <dbReference type="NCBI Taxonomy" id="7067"/>
    <lineage>
        <taxon>Eukaryota</taxon>
        <taxon>Metazoa</taxon>
        <taxon>Ecdysozoa</taxon>
        <taxon>Arthropoda</taxon>
        <taxon>Hexapoda</taxon>
        <taxon>Insecta</taxon>
        <taxon>Pterygota</taxon>
        <taxon>Neoptera</taxon>
        <taxon>Endopterygota</taxon>
        <taxon>Coleoptera</taxon>
        <taxon>Polyphaga</taxon>
        <taxon>Cucujiformia</taxon>
        <taxon>Tenebrionidae</taxon>
        <taxon>Tenebrio</taxon>
    </lineage>
</organism>
<feature type="peptide" id="PRO_0000044104" description="Antidiuretic factor B">
    <location>
        <begin position="1"/>
        <end position="13"/>
    </location>
</feature>